<proteinExistence type="inferred from homology"/>
<sequence length="275" mass="30045">MAVIKCKPTSPGRRHLVKVVNSDLHKGKPFAGLLAKKSKSGGRNNTGRITVRHIGGGHKQHYRLIDFKRNKDGIPAKVERLEYDPNRTANIALVLYADGERRYILAAKGMKAGDKIQSGIDAEIKSGNALPLRNIPVGSVVHAVEMKPAKGAQIARSAGAYVQVIARDGAYATLRLRSGEMRKVPVDCRATLGEVGNAEHMLRQLGKAGAKRWRGVRPTVRGVAMNPVDHPHGGGEGRTSGGRHPVSPWGQPTKGYKTRSNKRTDKYIVRRRNKK</sequence>
<feature type="chain" id="PRO_1000086353" description="Large ribosomal subunit protein uL2">
    <location>
        <begin position="1"/>
        <end position="275"/>
    </location>
</feature>
<feature type="region of interest" description="Disordered" evidence="2">
    <location>
        <begin position="223"/>
        <end position="275"/>
    </location>
</feature>
<protein>
    <recommendedName>
        <fullName evidence="1">Large ribosomal subunit protein uL2</fullName>
    </recommendedName>
    <alternativeName>
        <fullName evidence="3">50S ribosomal protein L2</fullName>
    </alternativeName>
</protein>
<dbReference type="EMBL" id="CP000851">
    <property type="protein sequence ID" value="ABV85516.1"/>
    <property type="molecule type" value="Genomic_DNA"/>
</dbReference>
<dbReference type="RefSeq" id="WP_012153460.1">
    <property type="nucleotide sequence ID" value="NC_009901.1"/>
</dbReference>
<dbReference type="SMR" id="A8GYX9"/>
<dbReference type="STRING" id="398579.Spea_0187"/>
<dbReference type="KEGG" id="spl:Spea_0187"/>
<dbReference type="eggNOG" id="COG0090">
    <property type="taxonomic scope" value="Bacteria"/>
</dbReference>
<dbReference type="HOGENOM" id="CLU_036235_2_1_6"/>
<dbReference type="OrthoDB" id="9778722at2"/>
<dbReference type="Proteomes" id="UP000002608">
    <property type="component" value="Chromosome"/>
</dbReference>
<dbReference type="GO" id="GO:0015934">
    <property type="term" value="C:large ribosomal subunit"/>
    <property type="evidence" value="ECO:0007669"/>
    <property type="project" value="InterPro"/>
</dbReference>
<dbReference type="GO" id="GO:0019843">
    <property type="term" value="F:rRNA binding"/>
    <property type="evidence" value="ECO:0007669"/>
    <property type="project" value="UniProtKB-UniRule"/>
</dbReference>
<dbReference type="GO" id="GO:0003735">
    <property type="term" value="F:structural constituent of ribosome"/>
    <property type="evidence" value="ECO:0007669"/>
    <property type="project" value="InterPro"/>
</dbReference>
<dbReference type="GO" id="GO:0016740">
    <property type="term" value="F:transferase activity"/>
    <property type="evidence" value="ECO:0007669"/>
    <property type="project" value="InterPro"/>
</dbReference>
<dbReference type="GO" id="GO:0002181">
    <property type="term" value="P:cytoplasmic translation"/>
    <property type="evidence" value="ECO:0007669"/>
    <property type="project" value="TreeGrafter"/>
</dbReference>
<dbReference type="FunFam" id="2.30.30.30:FF:000001">
    <property type="entry name" value="50S ribosomal protein L2"/>
    <property type="match status" value="1"/>
</dbReference>
<dbReference type="FunFam" id="2.40.50.140:FF:000003">
    <property type="entry name" value="50S ribosomal protein L2"/>
    <property type="match status" value="1"/>
</dbReference>
<dbReference type="FunFam" id="4.10.950.10:FF:000001">
    <property type="entry name" value="50S ribosomal protein L2"/>
    <property type="match status" value="1"/>
</dbReference>
<dbReference type="Gene3D" id="2.30.30.30">
    <property type="match status" value="1"/>
</dbReference>
<dbReference type="Gene3D" id="2.40.50.140">
    <property type="entry name" value="Nucleic acid-binding proteins"/>
    <property type="match status" value="1"/>
</dbReference>
<dbReference type="Gene3D" id="4.10.950.10">
    <property type="entry name" value="Ribosomal protein L2, domain 3"/>
    <property type="match status" value="1"/>
</dbReference>
<dbReference type="HAMAP" id="MF_01320_B">
    <property type="entry name" value="Ribosomal_uL2_B"/>
    <property type="match status" value="1"/>
</dbReference>
<dbReference type="InterPro" id="IPR012340">
    <property type="entry name" value="NA-bd_OB-fold"/>
</dbReference>
<dbReference type="InterPro" id="IPR014722">
    <property type="entry name" value="Rib_uL2_dom2"/>
</dbReference>
<dbReference type="InterPro" id="IPR002171">
    <property type="entry name" value="Ribosomal_uL2"/>
</dbReference>
<dbReference type="InterPro" id="IPR005880">
    <property type="entry name" value="Ribosomal_uL2_bac/org-type"/>
</dbReference>
<dbReference type="InterPro" id="IPR022669">
    <property type="entry name" value="Ribosomal_uL2_C"/>
</dbReference>
<dbReference type="InterPro" id="IPR022671">
    <property type="entry name" value="Ribosomal_uL2_CS"/>
</dbReference>
<dbReference type="InterPro" id="IPR014726">
    <property type="entry name" value="Ribosomal_uL2_dom3"/>
</dbReference>
<dbReference type="InterPro" id="IPR022666">
    <property type="entry name" value="Ribosomal_uL2_RNA-bd_dom"/>
</dbReference>
<dbReference type="InterPro" id="IPR008991">
    <property type="entry name" value="Translation_prot_SH3-like_sf"/>
</dbReference>
<dbReference type="NCBIfam" id="TIGR01171">
    <property type="entry name" value="rplB_bact"/>
    <property type="match status" value="1"/>
</dbReference>
<dbReference type="PANTHER" id="PTHR13691:SF5">
    <property type="entry name" value="LARGE RIBOSOMAL SUBUNIT PROTEIN UL2M"/>
    <property type="match status" value="1"/>
</dbReference>
<dbReference type="PANTHER" id="PTHR13691">
    <property type="entry name" value="RIBOSOMAL PROTEIN L2"/>
    <property type="match status" value="1"/>
</dbReference>
<dbReference type="Pfam" id="PF00181">
    <property type="entry name" value="Ribosomal_L2"/>
    <property type="match status" value="1"/>
</dbReference>
<dbReference type="Pfam" id="PF03947">
    <property type="entry name" value="Ribosomal_L2_C"/>
    <property type="match status" value="1"/>
</dbReference>
<dbReference type="PIRSF" id="PIRSF002158">
    <property type="entry name" value="Ribosomal_L2"/>
    <property type="match status" value="1"/>
</dbReference>
<dbReference type="SMART" id="SM01383">
    <property type="entry name" value="Ribosomal_L2"/>
    <property type="match status" value="1"/>
</dbReference>
<dbReference type="SMART" id="SM01382">
    <property type="entry name" value="Ribosomal_L2_C"/>
    <property type="match status" value="1"/>
</dbReference>
<dbReference type="SUPFAM" id="SSF50249">
    <property type="entry name" value="Nucleic acid-binding proteins"/>
    <property type="match status" value="1"/>
</dbReference>
<dbReference type="SUPFAM" id="SSF50104">
    <property type="entry name" value="Translation proteins SH3-like domain"/>
    <property type="match status" value="1"/>
</dbReference>
<dbReference type="PROSITE" id="PS00467">
    <property type="entry name" value="RIBOSOMAL_L2"/>
    <property type="match status" value="1"/>
</dbReference>
<evidence type="ECO:0000255" key="1">
    <source>
        <dbReference type="HAMAP-Rule" id="MF_01320"/>
    </source>
</evidence>
<evidence type="ECO:0000256" key="2">
    <source>
        <dbReference type="SAM" id="MobiDB-lite"/>
    </source>
</evidence>
<evidence type="ECO:0000305" key="3"/>
<name>RL2_SHEPA</name>
<accession>A8GYX9</accession>
<organism>
    <name type="scientific">Shewanella pealeana (strain ATCC 700345 / ANG-SQ1)</name>
    <dbReference type="NCBI Taxonomy" id="398579"/>
    <lineage>
        <taxon>Bacteria</taxon>
        <taxon>Pseudomonadati</taxon>
        <taxon>Pseudomonadota</taxon>
        <taxon>Gammaproteobacteria</taxon>
        <taxon>Alteromonadales</taxon>
        <taxon>Shewanellaceae</taxon>
        <taxon>Shewanella</taxon>
    </lineage>
</organism>
<keyword id="KW-1185">Reference proteome</keyword>
<keyword id="KW-0687">Ribonucleoprotein</keyword>
<keyword id="KW-0689">Ribosomal protein</keyword>
<keyword id="KW-0694">RNA-binding</keyword>
<keyword id="KW-0699">rRNA-binding</keyword>
<comment type="function">
    <text evidence="1">One of the primary rRNA binding proteins. Required for association of the 30S and 50S subunits to form the 70S ribosome, for tRNA binding and peptide bond formation. It has been suggested to have peptidyltransferase activity; this is somewhat controversial. Makes several contacts with the 16S rRNA in the 70S ribosome.</text>
</comment>
<comment type="subunit">
    <text evidence="1">Part of the 50S ribosomal subunit. Forms a bridge to the 30S subunit in the 70S ribosome.</text>
</comment>
<comment type="similarity">
    <text evidence="1">Belongs to the universal ribosomal protein uL2 family.</text>
</comment>
<gene>
    <name evidence="1" type="primary">rplB</name>
    <name type="ordered locus">Spea_0187</name>
</gene>
<reference key="1">
    <citation type="submission" date="2007-10" db="EMBL/GenBank/DDBJ databases">
        <title>Complete sequence of Shewanella pealeana ATCC 700345.</title>
        <authorList>
            <consortium name="US DOE Joint Genome Institute"/>
            <person name="Copeland A."/>
            <person name="Lucas S."/>
            <person name="Lapidus A."/>
            <person name="Barry K."/>
            <person name="Glavina del Rio T."/>
            <person name="Dalin E."/>
            <person name="Tice H."/>
            <person name="Pitluck S."/>
            <person name="Chertkov O."/>
            <person name="Brettin T."/>
            <person name="Bruce D."/>
            <person name="Detter J.C."/>
            <person name="Han C."/>
            <person name="Schmutz J."/>
            <person name="Larimer F."/>
            <person name="Land M."/>
            <person name="Hauser L."/>
            <person name="Kyrpides N."/>
            <person name="Kim E."/>
            <person name="Zhao J.-S.Z."/>
            <person name="Manno D."/>
            <person name="Hawari J."/>
            <person name="Richardson P."/>
        </authorList>
    </citation>
    <scope>NUCLEOTIDE SEQUENCE [LARGE SCALE GENOMIC DNA]</scope>
    <source>
        <strain>ATCC 700345 / ANG-SQ1</strain>
    </source>
</reference>